<name>RECA_LIMRD</name>
<evidence type="ECO:0000255" key="1">
    <source>
        <dbReference type="HAMAP-Rule" id="MF_00268"/>
    </source>
</evidence>
<evidence type="ECO:0000256" key="2">
    <source>
        <dbReference type="SAM" id="MobiDB-lite"/>
    </source>
</evidence>
<proteinExistence type="inferred from homology"/>
<gene>
    <name evidence="1" type="primary">recA</name>
    <name type="ordered locus">Lreu_0523</name>
</gene>
<feature type="chain" id="PRO_1000059128" description="Protein RecA">
    <location>
        <begin position="1"/>
        <end position="362"/>
    </location>
</feature>
<feature type="region of interest" description="Disordered" evidence="2">
    <location>
        <begin position="323"/>
        <end position="362"/>
    </location>
</feature>
<feature type="compositionally biased region" description="Basic and acidic residues" evidence="2">
    <location>
        <begin position="331"/>
        <end position="362"/>
    </location>
</feature>
<feature type="binding site" evidence="1">
    <location>
        <begin position="65"/>
        <end position="72"/>
    </location>
    <ligand>
        <name>ATP</name>
        <dbReference type="ChEBI" id="CHEBI:30616"/>
    </ligand>
</feature>
<keyword id="KW-0067">ATP-binding</keyword>
<keyword id="KW-0963">Cytoplasm</keyword>
<keyword id="KW-0227">DNA damage</keyword>
<keyword id="KW-0233">DNA recombination</keyword>
<keyword id="KW-0234">DNA repair</keyword>
<keyword id="KW-0238">DNA-binding</keyword>
<keyword id="KW-0547">Nucleotide-binding</keyword>
<keyword id="KW-1185">Reference proteome</keyword>
<keyword id="KW-0742">SOS response</keyword>
<organism>
    <name type="scientific">Limosilactobacillus reuteri (strain DSM 20016)</name>
    <name type="common">Lactobacillus reuteri</name>
    <dbReference type="NCBI Taxonomy" id="557436"/>
    <lineage>
        <taxon>Bacteria</taxon>
        <taxon>Bacillati</taxon>
        <taxon>Bacillota</taxon>
        <taxon>Bacilli</taxon>
        <taxon>Lactobacillales</taxon>
        <taxon>Lactobacillaceae</taxon>
        <taxon>Limosilactobacillus</taxon>
    </lineage>
</organism>
<comment type="function">
    <text evidence="1">Can catalyze the hydrolysis of ATP in the presence of single-stranded DNA, the ATP-dependent uptake of single-stranded DNA by duplex DNA, and the ATP-dependent hybridization of homologous single-stranded DNAs. It interacts with LexA causing its activation and leading to its autocatalytic cleavage.</text>
</comment>
<comment type="subcellular location">
    <subcellularLocation>
        <location evidence="1">Cytoplasm</location>
    </subcellularLocation>
</comment>
<comment type="similarity">
    <text evidence="1">Belongs to the RecA family.</text>
</comment>
<dbReference type="EMBL" id="CP000705">
    <property type="protein sequence ID" value="ABQ82791.1"/>
    <property type="molecule type" value="Genomic_DNA"/>
</dbReference>
<dbReference type="RefSeq" id="WP_003667620.1">
    <property type="nucleotide sequence ID" value="NZ_AZDD01000007.1"/>
</dbReference>
<dbReference type="SMR" id="A5VIW7"/>
<dbReference type="STRING" id="557436.Lreu_0523"/>
<dbReference type="GeneID" id="77192019"/>
<dbReference type="KEGG" id="lre:Lreu_0523"/>
<dbReference type="PATRIC" id="fig|557436.17.peg.1803"/>
<dbReference type="eggNOG" id="COG0468">
    <property type="taxonomic scope" value="Bacteria"/>
</dbReference>
<dbReference type="HOGENOM" id="CLU_040469_3_2_9"/>
<dbReference type="Proteomes" id="UP000001991">
    <property type="component" value="Chromosome"/>
</dbReference>
<dbReference type="GO" id="GO:0005829">
    <property type="term" value="C:cytosol"/>
    <property type="evidence" value="ECO:0007669"/>
    <property type="project" value="TreeGrafter"/>
</dbReference>
<dbReference type="GO" id="GO:0005524">
    <property type="term" value="F:ATP binding"/>
    <property type="evidence" value="ECO:0007669"/>
    <property type="project" value="UniProtKB-UniRule"/>
</dbReference>
<dbReference type="GO" id="GO:0016887">
    <property type="term" value="F:ATP hydrolysis activity"/>
    <property type="evidence" value="ECO:0007669"/>
    <property type="project" value="InterPro"/>
</dbReference>
<dbReference type="GO" id="GO:0140664">
    <property type="term" value="F:ATP-dependent DNA damage sensor activity"/>
    <property type="evidence" value="ECO:0007669"/>
    <property type="project" value="InterPro"/>
</dbReference>
<dbReference type="GO" id="GO:0003684">
    <property type="term" value="F:damaged DNA binding"/>
    <property type="evidence" value="ECO:0007669"/>
    <property type="project" value="UniProtKB-UniRule"/>
</dbReference>
<dbReference type="GO" id="GO:0003697">
    <property type="term" value="F:single-stranded DNA binding"/>
    <property type="evidence" value="ECO:0007669"/>
    <property type="project" value="UniProtKB-UniRule"/>
</dbReference>
<dbReference type="GO" id="GO:0006310">
    <property type="term" value="P:DNA recombination"/>
    <property type="evidence" value="ECO:0007669"/>
    <property type="project" value="UniProtKB-UniRule"/>
</dbReference>
<dbReference type="GO" id="GO:0006281">
    <property type="term" value="P:DNA repair"/>
    <property type="evidence" value="ECO:0007669"/>
    <property type="project" value="UniProtKB-UniRule"/>
</dbReference>
<dbReference type="GO" id="GO:0009432">
    <property type="term" value="P:SOS response"/>
    <property type="evidence" value="ECO:0007669"/>
    <property type="project" value="UniProtKB-UniRule"/>
</dbReference>
<dbReference type="CDD" id="cd00983">
    <property type="entry name" value="RecA"/>
    <property type="match status" value="1"/>
</dbReference>
<dbReference type="FunFam" id="3.40.50.300:FF:000087">
    <property type="entry name" value="Recombinase RecA"/>
    <property type="match status" value="1"/>
</dbReference>
<dbReference type="Gene3D" id="3.40.50.300">
    <property type="entry name" value="P-loop containing nucleotide triphosphate hydrolases"/>
    <property type="match status" value="1"/>
</dbReference>
<dbReference type="HAMAP" id="MF_00268">
    <property type="entry name" value="RecA"/>
    <property type="match status" value="1"/>
</dbReference>
<dbReference type="InterPro" id="IPR003593">
    <property type="entry name" value="AAA+_ATPase"/>
</dbReference>
<dbReference type="InterPro" id="IPR013765">
    <property type="entry name" value="DNA_recomb/repair_RecA"/>
</dbReference>
<dbReference type="InterPro" id="IPR020584">
    <property type="entry name" value="DNA_recomb/repair_RecA_CS"/>
</dbReference>
<dbReference type="InterPro" id="IPR027417">
    <property type="entry name" value="P-loop_NTPase"/>
</dbReference>
<dbReference type="InterPro" id="IPR049261">
    <property type="entry name" value="RecA-like_C"/>
</dbReference>
<dbReference type="InterPro" id="IPR049428">
    <property type="entry name" value="RecA-like_N"/>
</dbReference>
<dbReference type="InterPro" id="IPR020588">
    <property type="entry name" value="RecA_ATP-bd"/>
</dbReference>
<dbReference type="InterPro" id="IPR023400">
    <property type="entry name" value="RecA_C_sf"/>
</dbReference>
<dbReference type="InterPro" id="IPR020587">
    <property type="entry name" value="RecA_monomer-monomer_interface"/>
</dbReference>
<dbReference type="NCBIfam" id="TIGR02012">
    <property type="entry name" value="tigrfam_recA"/>
    <property type="match status" value="1"/>
</dbReference>
<dbReference type="PANTHER" id="PTHR45900:SF1">
    <property type="entry name" value="MITOCHONDRIAL DNA REPAIR PROTEIN RECA HOMOLOG-RELATED"/>
    <property type="match status" value="1"/>
</dbReference>
<dbReference type="PANTHER" id="PTHR45900">
    <property type="entry name" value="RECA"/>
    <property type="match status" value="1"/>
</dbReference>
<dbReference type="Pfam" id="PF00154">
    <property type="entry name" value="RecA"/>
    <property type="match status" value="1"/>
</dbReference>
<dbReference type="Pfam" id="PF21096">
    <property type="entry name" value="RecA_C"/>
    <property type="match status" value="1"/>
</dbReference>
<dbReference type="PRINTS" id="PR00142">
    <property type="entry name" value="RECA"/>
</dbReference>
<dbReference type="SMART" id="SM00382">
    <property type="entry name" value="AAA"/>
    <property type="match status" value="1"/>
</dbReference>
<dbReference type="SUPFAM" id="SSF52540">
    <property type="entry name" value="P-loop containing nucleoside triphosphate hydrolases"/>
    <property type="match status" value="1"/>
</dbReference>
<dbReference type="SUPFAM" id="SSF54752">
    <property type="entry name" value="RecA protein, C-terminal domain"/>
    <property type="match status" value="1"/>
</dbReference>
<dbReference type="PROSITE" id="PS00321">
    <property type="entry name" value="RECA_1"/>
    <property type="match status" value="1"/>
</dbReference>
<dbReference type="PROSITE" id="PS50162">
    <property type="entry name" value="RECA_2"/>
    <property type="match status" value="1"/>
</dbReference>
<dbReference type="PROSITE" id="PS50163">
    <property type="entry name" value="RECA_3"/>
    <property type="match status" value="1"/>
</dbReference>
<protein>
    <recommendedName>
        <fullName evidence="1">Protein RecA</fullName>
    </recommendedName>
    <alternativeName>
        <fullName evidence="1">Recombinase A</fullName>
    </alternativeName>
</protein>
<accession>A5VIW7</accession>
<sequence>MADQRKAALDVAIRKIEKNFGKGSIMRMGDATDMKVASVSSGSLAIDKALGIGGYPRGRIVEIYGPESSGKTTVALHAVAEVQRQGGTAAYIDAENALDPQYAEALGVNIDDLLLSQPDSGEEGLEIADALISSGAVDLVIVDSVAALVPRAEIDGDMGDTHVGLQARLMSQALRKLSGEINKTKTIAIFINQIREKVGVMFGNPETTTGGRALKFYSTIRMEIRRAEQIKNGTDVIGNKAKVKIVKNKVAPPFKRCEVDIMYGEGISKTGELLDMAVENDLVDKSGAWYSYGSERIGQGRENAKKWLKEHPDSMNELMDKVRVANGMEPLNEKSTKETADDKASGKTGENKQETIEEASKE</sequence>
<reference key="1">
    <citation type="journal article" date="2011" name="PLoS Genet.">
        <title>The evolution of host specialization in the vertebrate gut symbiont Lactobacillus reuteri.</title>
        <authorList>
            <person name="Frese S.A."/>
            <person name="Benson A.K."/>
            <person name="Tannock G.W."/>
            <person name="Loach D.M."/>
            <person name="Kim J."/>
            <person name="Zhang M."/>
            <person name="Oh P.L."/>
            <person name="Heng N.C."/>
            <person name="Patil P.B."/>
            <person name="Juge N."/>
            <person name="Mackenzie D.A."/>
            <person name="Pearson B.M."/>
            <person name="Lapidus A."/>
            <person name="Dalin E."/>
            <person name="Tice H."/>
            <person name="Goltsman E."/>
            <person name="Land M."/>
            <person name="Hauser L."/>
            <person name="Ivanova N."/>
            <person name="Kyrpides N.C."/>
            <person name="Walter J."/>
        </authorList>
    </citation>
    <scope>NUCLEOTIDE SEQUENCE [LARGE SCALE GENOMIC DNA]</scope>
    <source>
        <strain>DSM 20016</strain>
    </source>
</reference>